<dbReference type="EMBL" id="BX640427">
    <property type="protein sequence ID" value="CAE36793.1"/>
    <property type="molecule type" value="Genomic_DNA"/>
</dbReference>
<dbReference type="SMR" id="Q7WA92"/>
<dbReference type="KEGG" id="bpa:BPP1491"/>
<dbReference type="HOGENOM" id="CLU_069313_0_0_4"/>
<dbReference type="Proteomes" id="UP000001421">
    <property type="component" value="Chromosome"/>
</dbReference>
<dbReference type="GO" id="GO:0009427">
    <property type="term" value="C:bacterial-type flagellum basal body, distal rod, L ring"/>
    <property type="evidence" value="ECO:0007669"/>
    <property type="project" value="InterPro"/>
</dbReference>
<dbReference type="GO" id="GO:0009279">
    <property type="term" value="C:cell outer membrane"/>
    <property type="evidence" value="ECO:0007669"/>
    <property type="project" value="UniProtKB-SubCell"/>
</dbReference>
<dbReference type="GO" id="GO:0003774">
    <property type="term" value="F:cytoskeletal motor activity"/>
    <property type="evidence" value="ECO:0007669"/>
    <property type="project" value="InterPro"/>
</dbReference>
<dbReference type="GO" id="GO:0071973">
    <property type="term" value="P:bacterial-type flagellum-dependent cell motility"/>
    <property type="evidence" value="ECO:0007669"/>
    <property type="project" value="InterPro"/>
</dbReference>
<dbReference type="HAMAP" id="MF_00415">
    <property type="entry name" value="FlgH"/>
    <property type="match status" value="1"/>
</dbReference>
<dbReference type="InterPro" id="IPR000527">
    <property type="entry name" value="Flag_Lring"/>
</dbReference>
<dbReference type="NCBIfam" id="NF009340">
    <property type="entry name" value="PRK12700.1"/>
    <property type="match status" value="1"/>
</dbReference>
<dbReference type="PANTHER" id="PTHR34933">
    <property type="entry name" value="FLAGELLAR L-RING PROTEIN"/>
    <property type="match status" value="1"/>
</dbReference>
<dbReference type="PANTHER" id="PTHR34933:SF3">
    <property type="entry name" value="FLAGELLAR L-RING PROTEIN"/>
    <property type="match status" value="1"/>
</dbReference>
<dbReference type="Pfam" id="PF02107">
    <property type="entry name" value="FlgH"/>
    <property type="match status" value="1"/>
</dbReference>
<dbReference type="PRINTS" id="PR01008">
    <property type="entry name" value="FLGLRINGFLGH"/>
</dbReference>
<dbReference type="PROSITE" id="PS51257">
    <property type="entry name" value="PROKAR_LIPOPROTEIN"/>
    <property type="match status" value="1"/>
</dbReference>
<keyword id="KW-0975">Bacterial flagellum</keyword>
<keyword id="KW-0998">Cell outer membrane</keyword>
<keyword id="KW-0449">Lipoprotein</keyword>
<keyword id="KW-0472">Membrane</keyword>
<keyword id="KW-0564">Palmitate</keyword>
<keyword id="KW-0732">Signal</keyword>
<name>FLGH_BORPA</name>
<protein>
    <recommendedName>
        <fullName evidence="1">Flagellar L-ring protein</fullName>
    </recommendedName>
    <alternativeName>
        <fullName evidence="1">Basal body L-ring protein</fullName>
    </alternativeName>
</protein>
<feature type="signal peptide" evidence="1">
    <location>
        <begin position="1"/>
        <end position="21"/>
    </location>
</feature>
<feature type="chain" id="PRO_0000009424" description="Flagellar L-ring protein">
    <location>
        <begin position="22"/>
        <end position="230"/>
    </location>
</feature>
<feature type="region of interest" description="Disordered" evidence="2">
    <location>
        <begin position="34"/>
        <end position="53"/>
    </location>
</feature>
<feature type="compositionally biased region" description="Pro residues" evidence="2">
    <location>
        <begin position="36"/>
        <end position="46"/>
    </location>
</feature>
<feature type="lipid moiety-binding region" description="N-palmitoyl cysteine" evidence="1">
    <location>
        <position position="22"/>
    </location>
</feature>
<feature type="lipid moiety-binding region" description="S-diacylglycerol cysteine" evidence="1">
    <location>
        <position position="22"/>
    </location>
</feature>
<sequence length="230" mass="24192">MMLKTVLRLPVCAALLALAAGCAMIPPEPVVTGPLTAPPPPPPQPSARPNGSIYQPSAYGNYPLFEDRRPRNVGDIVTIVLEEKTNAAKGVATNTSRDGSATLGVAAAPRFMDGVINDKLDTDISGGNTANGTGKSSANNTFTGTITTTVIGVLPNGNLQIAGEKQIAINRGSEYVRFSGVVDPRSITGSNTVSSTRVADARIEYRSKGVMDEVQTMGWLQRFFLIASPF</sequence>
<comment type="function">
    <text evidence="1">Assembles around the rod to form the L-ring and probably protects the motor/basal body from shearing forces during rotation.</text>
</comment>
<comment type="subunit">
    <text evidence="1">The basal body constitutes a major portion of the flagellar organelle and consists of four rings (L,P,S, and M) mounted on a central rod.</text>
</comment>
<comment type="subcellular location">
    <subcellularLocation>
        <location evidence="1">Cell outer membrane</location>
        <topology evidence="1">Lipid-anchor</topology>
    </subcellularLocation>
    <subcellularLocation>
        <location evidence="1">Bacterial flagellum basal body</location>
    </subcellularLocation>
</comment>
<comment type="similarity">
    <text evidence="1">Belongs to the FlgH family.</text>
</comment>
<gene>
    <name evidence="1" type="primary">flgH</name>
    <name type="ordered locus">BPP1491</name>
</gene>
<organism>
    <name type="scientific">Bordetella parapertussis (strain 12822 / ATCC BAA-587 / NCTC 13253)</name>
    <dbReference type="NCBI Taxonomy" id="257311"/>
    <lineage>
        <taxon>Bacteria</taxon>
        <taxon>Pseudomonadati</taxon>
        <taxon>Pseudomonadota</taxon>
        <taxon>Betaproteobacteria</taxon>
        <taxon>Burkholderiales</taxon>
        <taxon>Alcaligenaceae</taxon>
        <taxon>Bordetella</taxon>
    </lineage>
</organism>
<reference key="1">
    <citation type="journal article" date="2003" name="Nat. Genet.">
        <title>Comparative analysis of the genome sequences of Bordetella pertussis, Bordetella parapertussis and Bordetella bronchiseptica.</title>
        <authorList>
            <person name="Parkhill J."/>
            <person name="Sebaihia M."/>
            <person name="Preston A."/>
            <person name="Murphy L.D."/>
            <person name="Thomson N.R."/>
            <person name="Harris D.E."/>
            <person name="Holden M.T.G."/>
            <person name="Churcher C.M."/>
            <person name="Bentley S.D."/>
            <person name="Mungall K.L."/>
            <person name="Cerdeno-Tarraga A.-M."/>
            <person name="Temple L."/>
            <person name="James K.D."/>
            <person name="Harris B."/>
            <person name="Quail M.A."/>
            <person name="Achtman M."/>
            <person name="Atkin R."/>
            <person name="Baker S."/>
            <person name="Basham D."/>
            <person name="Bason N."/>
            <person name="Cherevach I."/>
            <person name="Chillingworth T."/>
            <person name="Collins M."/>
            <person name="Cronin A."/>
            <person name="Davis P."/>
            <person name="Doggett J."/>
            <person name="Feltwell T."/>
            <person name="Goble A."/>
            <person name="Hamlin N."/>
            <person name="Hauser H."/>
            <person name="Holroyd S."/>
            <person name="Jagels K."/>
            <person name="Leather S."/>
            <person name="Moule S."/>
            <person name="Norberczak H."/>
            <person name="O'Neil S."/>
            <person name="Ormond D."/>
            <person name="Price C."/>
            <person name="Rabbinowitsch E."/>
            <person name="Rutter S."/>
            <person name="Sanders M."/>
            <person name="Saunders D."/>
            <person name="Seeger K."/>
            <person name="Sharp S."/>
            <person name="Simmonds M."/>
            <person name="Skelton J."/>
            <person name="Squares R."/>
            <person name="Squares S."/>
            <person name="Stevens K."/>
            <person name="Unwin L."/>
            <person name="Whitehead S."/>
            <person name="Barrell B.G."/>
            <person name="Maskell D.J."/>
        </authorList>
    </citation>
    <scope>NUCLEOTIDE SEQUENCE [LARGE SCALE GENOMIC DNA]</scope>
    <source>
        <strain>12822 / ATCC BAA-587 / NCTC 13253</strain>
    </source>
</reference>
<proteinExistence type="inferred from homology"/>
<evidence type="ECO:0000255" key="1">
    <source>
        <dbReference type="HAMAP-Rule" id="MF_00415"/>
    </source>
</evidence>
<evidence type="ECO:0000256" key="2">
    <source>
        <dbReference type="SAM" id="MobiDB-lite"/>
    </source>
</evidence>
<accession>Q7WA92</accession>